<accession>Q8G2D8</accession>
<accession>G0K6K7</accession>
<name>ATPF2_BRUSU</name>
<proteinExistence type="inferred from homology"/>
<feature type="chain" id="PRO_0000368375" description="ATP synthase subunit b 2">
    <location>
        <begin position="1"/>
        <end position="159"/>
    </location>
</feature>
<feature type="transmembrane region" description="Helical" evidence="1">
    <location>
        <begin position="1"/>
        <end position="21"/>
    </location>
</feature>
<organism>
    <name type="scientific">Brucella suis biovar 1 (strain 1330)</name>
    <dbReference type="NCBI Taxonomy" id="204722"/>
    <lineage>
        <taxon>Bacteria</taxon>
        <taxon>Pseudomonadati</taxon>
        <taxon>Pseudomonadota</taxon>
        <taxon>Alphaproteobacteria</taxon>
        <taxon>Hyphomicrobiales</taxon>
        <taxon>Brucellaceae</taxon>
        <taxon>Brucella/Ochrobactrum group</taxon>
        <taxon>Brucella</taxon>
    </lineage>
</organism>
<evidence type="ECO:0000255" key="1">
    <source>
        <dbReference type="HAMAP-Rule" id="MF_01398"/>
    </source>
</evidence>
<dbReference type="EMBL" id="AE014291">
    <property type="protein sequence ID" value="AAN29331.1"/>
    <property type="molecule type" value="Genomic_DNA"/>
</dbReference>
<dbReference type="EMBL" id="CP002997">
    <property type="protein sequence ID" value="AEM17744.1"/>
    <property type="molecule type" value="Genomic_DNA"/>
</dbReference>
<dbReference type="RefSeq" id="WP_004690581.1">
    <property type="nucleotide sequence ID" value="NZ_KN046804.1"/>
</dbReference>
<dbReference type="SMR" id="Q8G2D8"/>
<dbReference type="KEGG" id="bms:BR0385"/>
<dbReference type="KEGG" id="bsi:BS1330_I0386"/>
<dbReference type="PATRIC" id="fig|204722.21.peg.3599"/>
<dbReference type="HOGENOM" id="CLU_079215_6_1_5"/>
<dbReference type="PhylomeDB" id="Q8G2D8"/>
<dbReference type="Proteomes" id="UP000007104">
    <property type="component" value="Chromosome I"/>
</dbReference>
<dbReference type="GO" id="GO:0005886">
    <property type="term" value="C:plasma membrane"/>
    <property type="evidence" value="ECO:0007669"/>
    <property type="project" value="UniProtKB-SubCell"/>
</dbReference>
<dbReference type="GO" id="GO:0045259">
    <property type="term" value="C:proton-transporting ATP synthase complex"/>
    <property type="evidence" value="ECO:0007669"/>
    <property type="project" value="UniProtKB-KW"/>
</dbReference>
<dbReference type="GO" id="GO:0046933">
    <property type="term" value="F:proton-transporting ATP synthase activity, rotational mechanism"/>
    <property type="evidence" value="ECO:0007669"/>
    <property type="project" value="UniProtKB-UniRule"/>
</dbReference>
<dbReference type="GO" id="GO:0046961">
    <property type="term" value="F:proton-transporting ATPase activity, rotational mechanism"/>
    <property type="evidence" value="ECO:0007669"/>
    <property type="project" value="TreeGrafter"/>
</dbReference>
<dbReference type="CDD" id="cd06503">
    <property type="entry name" value="ATP-synt_Fo_b"/>
    <property type="match status" value="1"/>
</dbReference>
<dbReference type="HAMAP" id="MF_01398">
    <property type="entry name" value="ATP_synth_b_bprime"/>
    <property type="match status" value="1"/>
</dbReference>
<dbReference type="InterPro" id="IPR002146">
    <property type="entry name" value="ATP_synth_b/b'su_bac/chlpt"/>
</dbReference>
<dbReference type="InterPro" id="IPR050059">
    <property type="entry name" value="ATP_synthase_B_chain"/>
</dbReference>
<dbReference type="NCBIfam" id="NF006611">
    <property type="entry name" value="PRK09173.1"/>
    <property type="match status" value="1"/>
</dbReference>
<dbReference type="PANTHER" id="PTHR33445:SF1">
    <property type="entry name" value="ATP SYNTHASE SUBUNIT B"/>
    <property type="match status" value="1"/>
</dbReference>
<dbReference type="PANTHER" id="PTHR33445">
    <property type="entry name" value="ATP SYNTHASE SUBUNIT B', CHLOROPLASTIC"/>
    <property type="match status" value="1"/>
</dbReference>
<dbReference type="Pfam" id="PF00430">
    <property type="entry name" value="ATP-synt_B"/>
    <property type="match status" value="1"/>
</dbReference>
<sequence>MDATFWAFIALVIFVVIVVYMKVPGMIGRTLDERADRIKKELEEARTLREEAQQLLAEYHRKRKEAEKEAGDIVASAEREAKALLEEAKRATEEYVARRNKLAEQKIATAETDAINAVRASAVDLAVAAAGSILAEKVDAKAAGNLFNDALAQVKSHLN</sequence>
<comment type="function">
    <text evidence="1">F(1)F(0) ATP synthase produces ATP from ADP in the presence of a proton or sodium gradient. F-type ATPases consist of two structural domains, F(1) containing the extramembraneous catalytic core and F(0) containing the membrane proton channel, linked together by a central stalk and a peripheral stalk. During catalysis, ATP synthesis in the catalytic domain of F(1) is coupled via a rotary mechanism of the central stalk subunits to proton translocation.</text>
</comment>
<comment type="function">
    <text evidence="1">Component of the F(0) channel, it forms part of the peripheral stalk, linking F(1) to F(0).</text>
</comment>
<comment type="subunit">
    <text evidence="1">F-type ATPases have 2 components, F(1) - the catalytic core - and F(0) - the membrane proton channel. F(1) has five subunits: alpha(3), beta(3), gamma(1), delta(1), epsilon(1). F(0) has three main subunits: a(1), b(2) and c(10-14). The alpha and beta chains form an alternating ring which encloses part of the gamma chain. F(1) is attached to F(0) by a central stalk formed by the gamma and epsilon chains, while a peripheral stalk is formed by the delta and b chains.</text>
</comment>
<comment type="subcellular location">
    <subcellularLocation>
        <location evidence="1">Cell inner membrane</location>
        <topology evidence="1">Single-pass membrane protein</topology>
    </subcellularLocation>
</comment>
<comment type="similarity">
    <text evidence="1">Belongs to the ATPase B chain family.</text>
</comment>
<keyword id="KW-0066">ATP synthesis</keyword>
<keyword id="KW-0997">Cell inner membrane</keyword>
<keyword id="KW-1003">Cell membrane</keyword>
<keyword id="KW-0138">CF(0)</keyword>
<keyword id="KW-0375">Hydrogen ion transport</keyword>
<keyword id="KW-0406">Ion transport</keyword>
<keyword id="KW-0472">Membrane</keyword>
<keyword id="KW-0812">Transmembrane</keyword>
<keyword id="KW-1133">Transmembrane helix</keyword>
<keyword id="KW-0813">Transport</keyword>
<reference key="1">
    <citation type="journal article" date="2002" name="Proc. Natl. Acad. Sci. U.S.A.">
        <title>The Brucella suis genome reveals fundamental similarities between animal and plant pathogens and symbionts.</title>
        <authorList>
            <person name="Paulsen I.T."/>
            <person name="Seshadri R."/>
            <person name="Nelson K.E."/>
            <person name="Eisen J.A."/>
            <person name="Heidelberg J.F."/>
            <person name="Read T.D."/>
            <person name="Dodson R.J."/>
            <person name="Umayam L.A."/>
            <person name="Brinkac L.M."/>
            <person name="Beanan M.J."/>
            <person name="Daugherty S.C."/>
            <person name="DeBoy R.T."/>
            <person name="Durkin A.S."/>
            <person name="Kolonay J.F."/>
            <person name="Madupu R."/>
            <person name="Nelson W.C."/>
            <person name="Ayodeji B."/>
            <person name="Kraul M."/>
            <person name="Shetty J."/>
            <person name="Malek J.A."/>
            <person name="Van Aken S.E."/>
            <person name="Riedmuller S."/>
            <person name="Tettelin H."/>
            <person name="Gill S.R."/>
            <person name="White O."/>
            <person name="Salzberg S.L."/>
            <person name="Hoover D.L."/>
            <person name="Lindler L.E."/>
            <person name="Halling S.M."/>
            <person name="Boyle S.M."/>
            <person name="Fraser C.M."/>
        </authorList>
    </citation>
    <scope>NUCLEOTIDE SEQUENCE [LARGE SCALE GENOMIC DNA]</scope>
    <source>
        <strain>1330</strain>
    </source>
</reference>
<reference key="2">
    <citation type="journal article" date="2011" name="J. Bacteriol.">
        <title>Revised genome sequence of Brucella suis 1330.</title>
        <authorList>
            <person name="Tae H."/>
            <person name="Shallom S."/>
            <person name="Settlage R."/>
            <person name="Preston D."/>
            <person name="Adams L.G."/>
            <person name="Garner H.R."/>
        </authorList>
    </citation>
    <scope>NUCLEOTIDE SEQUENCE [LARGE SCALE GENOMIC DNA]</scope>
    <source>
        <strain>1330</strain>
    </source>
</reference>
<protein>
    <recommendedName>
        <fullName evidence="1">ATP synthase subunit b 2</fullName>
    </recommendedName>
    <alternativeName>
        <fullName evidence="1">ATP synthase F(0) sector subunit b 2</fullName>
    </alternativeName>
    <alternativeName>
        <fullName evidence="1">ATPase subunit I 2</fullName>
    </alternativeName>
    <alternativeName>
        <fullName evidence="1">F-type ATPase subunit b 2</fullName>
        <shortName evidence="1">F-ATPase subunit b 2</shortName>
    </alternativeName>
</protein>
<gene>
    <name evidence="1" type="primary">atpF2</name>
    <name type="synonym">atpF</name>
    <name type="ordered locus">BR0385</name>
    <name type="ordered locus">BS1330_I0386</name>
</gene>